<reference key="1">
    <citation type="journal article" date="2008" name="Toxicon">
        <title>Molecular diversification based on analysis of expressed sequence tags from the venom glands of the Chinese bird spider Ornithoctonus huwena.</title>
        <authorList>
            <person name="Jiang L."/>
            <person name="Peng L."/>
            <person name="Chen J."/>
            <person name="Zhang Y."/>
            <person name="Xiong X."/>
            <person name="Liang S."/>
        </authorList>
    </citation>
    <scope>NUCLEOTIDE SEQUENCE [MRNA]</scope>
    <source>
        <tissue>Venom gland</tissue>
    </source>
</reference>
<accession>B3FIS4</accession>
<proteinExistence type="evidence at transcript level"/>
<comment type="function">
    <text evidence="3">Agglutinates erythrocytes.</text>
</comment>
<comment type="subcellular location">
    <subcellularLocation>
        <location evidence="1">Secreted</location>
    </subcellularLocation>
</comment>
<comment type="tissue specificity">
    <text>Expressed by the venom gland.</text>
</comment>
<comment type="domain">
    <text>The presence of a 'disulfide through disulfide knot' structurally defines this protein as a knottin.</text>
</comment>
<comment type="similarity">
    <text evidence="5">Belongs to the neurotoxin 10 (Hwtx-1) family. 51 (Hntx-8) subfamily. Hntx-8 sub-subfamily.</text>
</comment>
<dbReference type="EMBL" id="EU195268">
    <property type="protein sequence ID" value="ABY77721.1"/>
    <property type="molecule type" value="mRNA"/>
</dbReference>
<dbReference type="BMRB" id="B3FIS4"/>
<dbReference type="SMR" id="B3FIS4"/>
<dbReference type="ArachnoServer" id="AS000355">
    <property type="toxin name" value="U5-theraphotoxin-Hs1a"/>
</dbReference>
<dbReference type="GO" id="GO:0005576">
    <property type="term" value="C:extracellular region"/>
    <property type="evidence" value="ECO:0007669"/>
    <property type="project" value="UniProtKB-SubCell"/>
</dbReference>
<dbReference type="GO" id="GO:0030246">
    <property type="term" value="F:carbohydrate binding"/>
    <property type="evidence" value="ECO:0007669"/>
    <property type="project" value="UniProtKB-KW"/>
</dbReference>
<dbReference type="GO" id="GO:0008200">
    <property type="term" value="F:ion channel inhibitor activity"/>
    <property type="evidence" value="ECO:0007669"/>
    <property type="project" value="InterPro"/>
</dbReference>
<dbReference type="GO" id="GO:0090729">
    <property type="term" value="F:toxin activity"/>
    <property type="evidence" value="ECO:0007669"/>
    <property type="project" value="UniProtKB-KW"/>
</dbReference>
<dbReference type="InterPro" id="IPR011696">
    <property type="entry name" value="Huwentoxin-1"/>
</dbReference>
<dbReference type="InterPro" id="IPR013140">
    <property type="entry name" value="Huwentoxin_CS1"/>
</dbReference>
<dbReference type="Pfam" id="PF07740">
    <property type="entry name" value="Toxin_12"/>
    <property type="match status" value="1"/>
</dbReference>
<dbReference type="SUPFAM" id="SSF57059">
    <property type="entry name" value="omega toxin-like"/>
    <property type="match status" value="1"/>
</dbReference>
<dbReference type="PROSITE" id="PS60021">
    <property type="entry name" value="HWTX_1"/>
    <property type="match status" value="1"/>
</dbReference>
<organism>
    <name type="scientific">Cyriopagopus schmidti</name>
    <name type="common">Chinese bird spider</name>
    <name type="synonym">Haplopelma schmidti</name>
    <dbReference type="NCBI Taxonomy" id="29017"/>
    <lineage>
        <taxon>Eukaryota</taxon>
        <taxon>Metazoa</taxon>
        <taxon>Ecdysozoa</taxon>
        <taxon>Arthropoda</taxon>
        <taxon>Chelicerata</taxon>
        <taxon>Arachnida</taxon>
        <taxon>Araneae</taxon>
        <taxon>Mygalomorphae</taxon>
        <taxon>Theraphosidae</taxon>
        <taxon>Cyriopagopus</taxon>
    </lineage>
</organism>
<feature type="signal peptide" evidence="4">
    <location>
        <begin position="1"/>
        <end position="21"/>
    </location>
</feature>
<feature type="propeptide" id="PRO_0000380170" evidence="1">
    <location>
        <begin position="22"/>
        <end position="49"/>
    </location>
</feature>
<feature type="chain" id="PRO_0000380171" description="U5-theraphotoxin-Hs1a 5">
    <location>
        <begin position="50"/>
        <end position="81"/>
    </location>
</feature>
<feature type="disulfide bond" evidence="2">
    <location>
        <begin position="51"/>
        <end position="63"/>
    </location>
</feature>
<feature type="disulfide bond" evidence="2">
    <location>
        <begin position="56"/>
        <end position="68"/>
    </location>
</feature>
<feature type="disulfide bond" evidence="2">
    <location>
        <begin position="62"/>
        <end position="75"/>
    </location>
</feature>
<name>TXLA5_CYRSC</name>
<evidence type="ECO:0000250" key="1"/>
<evidence type="ECO:0000250" key="2">
    <source>
        <dbReference type="UniProtKB" id="B3FIS6"/>
    </source>
</evidence>
<evidence type="ECO:0000250" key="3">
    <source>
        <dbReference type="UniProtKB" id="Q86C51"/>
    </source>
</evidence>
<evidence type="ECO:0000255" key="4"/>
<evidence type="ECO:0000305" key="5"/>
<keyword id="KW-0165">Cleavage on pair of basic residues</keyword>
<keyword id="KW-1015">Disulfide bond</keyword>
<keyword id="KW-0960">Knottin</keyword>
<keyword id="KW-0430">Lectin</keyword>
<keyword id="KW-0964">Secreted</keyword>
<keyword id="KW-0732">Signal</keyword>
<keyword id="KW-0800">Toxin</keyword>
<sequence length="83" mass="9405">MKTSMFLTLTGLVLLFVVCYASESEEKEFPKELPSSIFAADSDFKVEERGCLGDKCDYNNGCCSGYVCSRTWKWCVLAGPWRR</sequence>
<protein>
    <recommendedName>
        <fullName>U5-theraphotoxin-Hs1a 5</fullName>
        <shortName>U5-TRTX-Hs1a</shortName>
    </recommendedName>
    <alternativeName>
        <fullName>Lectin SHL-Ia5</fullName>
    </alternativeName>
</protein>